<sequence length="200" mass="22765">MASKIETLKANLEAALGARAVSLVEAVGELTLVVKASDYLEVAKQLRDDRSLGFEQLIDLCGVDYQTYGDGAYDGPRFAAVLHLLSVANNWRLRVRVFASDDDLPIVPSVVDIWNSANWYEREAFDLYGIVFEGHPDLRRILTDYGFIGHPFRKDFPVSGYVEMRYDPQEKRVVYQPVTIEPREITPRVIREDRYGGLKH</sequence>
<gene>
    <name evidence="1" type="primary">nuoC</name>
    <name type="ordered locus">BMA1827</name>
</gene>
<protein>
    <recommendedName>
        <fullName evidence="1">NADH-quinone oxidoreductase subunit C</fullName>
        <ecNumber evidence="1">7.1.1.-</ecNumber>
    </recommendedName>
    <alternativeName>
        <fullName evidence="1">NADH dehydrogenase I subunit C</fullName>
    </alternativeName>
    <alternativeName>
        <fullName evidence="1">NDH-1 subunit C</fullName>
    </alternativeName>
</protein>
<organism>
    <name type="scientific">Burkholderia mallei (strain ATCC 23344)</name>
    <dbReference type="NCBI Taxonomy" id="243160"/>
    <lineage>
        <taxon>Bacteria</taxon>
        <taxon>Pseudomonadati</taxon>
        <taxon>Pseudomonadota</taxon>
        <taxon>Betaproteobacteria</taxon>
        <taxon>Burkholderiales</taxon>
        <taxon>Burkholderiaceae</taxon>
        <taxon>Burkholderia</taxon>
        <taxon>pseudomallei group</taxon>
    </lineage>
</organism>
<name>NUOC_BURMA</name>
<feature type="chain" id="PRO_0000358064" description="NADH-quinone oxidoreductase subunit C">
    <location>
        <begin position="1"/>
        <end position="200"/>
    </location>
</feature>
<reference key="1">
    <citation type="journal article" date="2004" name="Proc. Natl. Acad. Sci. U.S.A.">
        <title>Structural flexibility in the Burkholderia mallei genome.</title>
        <authorList>
            <person name="Nierman W.C."/>
            <person name="DeShazer D."/>
            <person name="Kim H.S."/>
            <person name="Tettelin H."/>
            <person name="Nelson K.E."/>
            <person name="Feldblyum T.V."/>
            <person name="Ulrich R.L."/>
            <person name="Ronning C.M."/>
            <person name="Brinkac L.M."/>
            <person name="Daugherty S.C."/>
            <person name="Davidsen T.D."/>
            <person name="DeBoy R.T."/>
            <person name="Dimitrov G."/>
            <person name="Dodson R.J."/>
            <person name="Durkin A.S."/>
            <person name="Gwinn M.L."/>
            <person name="Haft D.H."/>
            <person name="Khouri H.M."/>
            <person name="Kolonay J.F."/>
            <person name="Madupu R."/>
            <person name="Mohammoud Y."/>
            <person name="Nelson W.C."/>
            <person name="Radune D."/>
            <person name="Romero C.M."/>
            <person name="Sarria S."/>
            <person name="Selengut J."/>
            <person name="Shamblin C."/>
            <person name="Sullivan S.A."/>
            <person name="White O."/>
            <person name="Yu Y."/>
            <person name="Zafar N."/>
            <person name="Zhou L."/>
            <person name="Fraser C.M."/>
        </authorList>
    </citation>
    <scope>NUCLEOTIDE SEQUENCE [LARGE SCALE GENOMIC DNA]</scope>
    <source>
        <strain>ATCC 23344</strain>
    </source>
</reference>
<accession>Q62IN7</accession>
<keyword id="KW-0997">Cell inner membrane</keyword>
<keyword id="KW-1003">Cell membrane</keyword>
<keyword id="KW-0472">Membrane</keyword>
<keyword id="KW-0520">NAD</keyword>
<keyword id="KW-0874">Quinone</keyword>
<keyword id="KW-1185">Reference proteome</keyword>
<keyword id="KW-1278">Translocase</keyword>
<keyword id="KW-0813">Transport</keyword>
<keyword id="KW-0830">Ubiquinone</keyword>
<comment type="function">
    <text evidence="1">NDH-1 shuttles electrons from NADH, via FMN and iron-sulfur (Fe-S) centers, to quinones in the respiratory chain. The immediate electron acceptor for the enzyme in this species is believed to be ubiquinone. Couples the redox reaction to proton translocation (for every two electrons transferred, four hydrogen ions are translocated across the cytoplasmic membrane), and thus conserves the redox energy in a proton gradient.</text>
</comment>
<comment type="catalytic activity">
    <reaction evidence="1">
        <text>a quinone + NADH + 5 H(+)(in) = a quinol + NAD(+) + 4 H(+)(out)</text>
        <dbReference type="Rhea" id="RHEA:57888"/>
        <dbReference type="ChEBI" id="CHEBI:15378"/>
        <dbReference type="ChEBI" id="CHEBI:24646"/>
        <dbReference type="ChEBI" id="CHEBI:57540"/>
        <dbReference type="ChEBI" id="CHEBI:57945"/>
        <dbReference type="ChEBI" id="CHEBI:132124"/>
    </reaction>
</comment>
<comment type="subunit">
    <text evidence="1">NDH-1 is composed of 14 different subunits. Subunits NuoB, C, D, E, F, and G constitute the peripheral sector of the complex.</text>
</comment>
<comment type="subcellular location">
    <subcellularLocation>
        <location evidence="1">Cell inner membrane</location>
        <topology evidence="1">Peripheral membrane protein</topology>
        <orientation evidence="1">Cytoplasmic side</orientation>
    </subcellularLocation>
</comment>
<comment type="similarity">
    <text evidence="1">Belongs to the complex I 30 kDa subunit family.</text>
</comment>
<dbReference type="EC" id="7.1.1.-" evidence="1"/>
<dbReference type="EMBL" id="CP000010">
    <property type="protein sequence ID" value="AAU49833.1"/>
    <property type="molecule type" value="Genomic_DNA"/>
</dbReference>
<dbReference type="RefSeq" id="WP_004186121.1">
    <property type="nucleotide sequence ID" value="NC_006348.1"/>
</dbReference>
<dbReference type="RefSeq" id="YP_103432.1">
    <property type="nucleotide sequence ID" value="NC_006348.1"/>
</dbReference>
<dbReference type="SMR" id="Q62IN7"/>
<dbReference type="KEGG" id="bma:BMA1827"/>
<dbReference type="PATRIC" id="fig|243160.12.peg.1865"/>
<dbReference type="eggNOG" id="COG0852">
    <property type="taxonomic scope" value="Bacteria"/>
</dbReference>
<dbReference type="HOGENOM" id="CLU_042628_2_1_4"/>
<dbReference type="Proteomes" id="UP000006693">
    <property type="component" value="Chromosome 1"/>
</dbReference>
<dbReference type="GO" id="GO:0005886">
    <property type="term" value="C:plasma membrane"/>
    <property type="evidence" value="ECO:0007669"/>
    <property type="project" value="UniProtKB-SubCell"/>
</dbReference>
<dbReference type="GO" id="GO:0008137">
    <property type="term" value="F:NADH dehydrogenase (ubiquinone) activity"/>
    <property type="evidence" value="ECO:0007669"/>
    <property type="project" value="InterPro"/>
</dbReference>
<dbReference type="GO" id="GO:0050136">
    <property type="term" value="F:NADH:ubiquinone reductase (non-electrogenic) activity"/>
    <property type="evidence" value="ECO:0007669"/>
    <property type="project" value="UniProtKB-UniRule"/>
</dbReference>
<dbReference type="GO" id="GO:0048038">
    <property type="term" value="F:quinone binding"/>
    <property type="evidence" value="ECO:0007669"/>
    <property type="project" value="UniProtKB-KW"/>
</dbReference>
<dbReference type="Gene3D" id="3.30.460.80">
    <property type="entry name" value="NADH:ubiquinone oxidoreductase, 30kDa subunit"/>
    <property type="match status" value="1"/>
</dbReference>
<dbReference type="HAMAP" id="MF_01357">
    <property type="entry name" value="NDH1_NuoC"/>
    <property type="match status" value="1"/>
</dbReference>
<dbReference type="InterPro" id="IPR010218">
    <property type="entry name" value="NADH_DH_suC"/>
</dbReference>
<dbReference type="InterPro" id="IPR037232">
    <property type="entry name" value="NADH_quin_OxRdtase_su_C/D-like"/>
</dbReference>
<dbReference type="InterPro" id="IPR001268">
    <property type="entry name" value="NADH_UbQ_OxRdtase_30kDa_su"/>
</dbReference>
<dbReference type="InterPro" id="IPR020396">
    <property type="entry name" value="NADH_UbQ_OxRdtase_CS"/>
</dbReference>
<dbReference type="NCBIfam" id="TIGR01961">
    <property type="entry name" value="NuoC_fam"/>
    <property type="match status" value="1"/>
</dbReference>
<dbReference type="NCBIfam" id="NF004730">
    <property type="entry name" value="PRK06074.1-1"/>
    <property type="match status" value="1"/>
</dbReference>
<dbReference type="PANTHER" id="PTHR10884:SF14">
    <property type="entry name" value="NADH DEHYDROGENASE [UBIQUINONE] IRON-SULFUR PROTEIN 3, MITOCHONDRIAL"/>
    <property type="match status" value="1"/>
</dbReference>
<dbReference type="PANTHER" id="PTHR10884">
    <property type="entry name" value="NADH DEHYDROGENASE UBIQUINONE IRON-SULFUR PROTEIN 3"/>
    <property type="match status" value="1"/>
</dbReference>
<dbReference type="Pfam" id="PF00329">
    <property type="entry name" value="Complex1_30kDa"/>
    <property type="match status" value="1"/>
</dbReference>
<dbReference type="SUPFAM" id="SSF143243">
    <property type="entry name" value="Nqo5-like"/>
    <property type="match status" value="1"/>
</dbReference>
<dbReference type="PROSITE" id="PS00542">
    <property type="entry name" value="COMPLEX1_30K"/>
    <property type="match status" value="1"/>
</dbReference>
<proteinExistence type="inferred from homology"/>
<evidence type="ECO:0000255" key="1">
    <source>
        <dbReference type="HAMAP-Rule" id="MF_01357"/>
    </source>
</evidence>